<reference key="1">
    <citation type="journal article" date="2005" name="Genome Biol.">
        <title>Full-length cDNAs from chicken bursal lymphocytes to facilitate gene function analysis.</title>
        <authorList>
            <person name="Caldwell R.B."/>
            <person name="Kierzek A.M."/>
            <person name="Arakawa H."/>
            <person name="Bezzubov Y."/>
            <person name="Zaim J."/>
            <person name="Fiedler P."/>
            <person name="Kutter S."/>
            <person name="Blagodatski A."/>
            <person name="Kostovska D."/>
            <person name="Koter M."/>
            <person name="Plachy J."/>
            <person name="Carninci P."/>
            <person name="Hayashizaki Y."/>
            <person name="Buerstedde J.-M."/>
        </authorList>
    </citation>
    <scope>NUCLEOTIDE SEQUENCE [LARGE SCALE MRNA]</scope>
    <source>
        <strain>CB</strain>
        <tissue>Bursa of Fabricius</tissue>
    </source>
</reference>
<name>TPC11_CHICK</name>
<sequence>MTPSQWDLPVELCCRPMAFVTLTGLDVVYNAVHRAVWDAFCANRRADRVPISFKVLPGDHEYPKCRTKRTSYEWYIPKGILKTGWMNKHLNLVPALVVVFYELDWDEPQWKEKQSECATRVEIVRQSLQGRNTKVAVVLIQKKTPLPPGEDVIASERAAALCNACDLSGKSLFVLPHTDHLVGYIIRLENAFYEHAQTYYYTEIRRVKSHKEFLNKTTHQLLFVRHQFKIAFFSELKQDTQNALKNYRTAYNLVHELRAHETNMLEIKTMAGFINYKICRLCFQHNTPLDAIAQFRKHIDLCKKKIGSAELAFEHAAWMSKQFQAFGDLFDEAIKLGLTAIQTQNPGFYYQQAAYYAQERKQLASMLCNHDSSVVYPNPDPLETQTGVLDFYGQRPWRQGTLSFDLSDPEKEKMGILSLQLKERNVLHSELIITLLSNAVAQFKKYKCPRMKSHLMVQMGEEYYFAKDYAKALKLLDYVMCEYRSEGWWTLLTSILTTALKCSYLMAQIKDYITYSLELLGRASTLKDDQKSRIEKNLIKVLMNESPDPEPDCDAAAVKASQKLWSDRVSLAGSNVFTIEVQDFIPFVQCKAKFLAPSFHVDVPVQFDIYLRADCPHPIRFSKLCISFNNQDYNQYCVVEEAYQKSDILEQSSQGTMCLVPGKTRKFTFKFVAKTEDVGKKIEITSVDLILGSESGRCVILNWRGGGGDAASSQEALQAARSFRRRPKLPDNEVHWDSLAIQASTMIISRVPNISVQLRHEPPALTNEMYCLVVTIESHEETVAKDVKLTAGLKPGQDANLTQKTQVTLRGTDTCDDSFPALLPDIPVGDLQPGEKLEKPIYIRCGTVGARMFLVYVSYLINTTVEGKEILCKCHRDETVTIETVFPFDVAIKFVSTKLEHLDRVFADIPFLLMTDILSASPWPLTIVTSQLQLSASMTSVDQLESYVENVVLQTGESASECFCLRCPPVTNSGGVATGCYIISWKRSSPVESVPVVSTVITLPHVIVESIPLHVKADLPSFGRVRESLPVRYHLQNKTNLVQDVEVSMEPSDAFMFSGLKQIRLRILPGTQQEVLYNFYPLMAGYQQLPSLHINLLRFPNFTNQLLRRFIPTHIFVKPQGRQADENSIAAA</sequence>
<feature type="chain" id="PRO_0000348074" description="Trafficking protein particle complex subunit 11">
    <location>
        <begin position="1"/>
        <end position="1132"/>
    </location>
</feature>
<organism>
    <name type="scientific">Gallus gallus</name>
    <name type="common">Chicken</name>
    <dbReference type="NCBI Taxonomy" id="9031"/>
    <lineage>
        <taxon>Eukaryota</taxon>
        <taxon>Metazoa</taxon>
        <taxon>Chordata</taxon>
        <taxon>Craniata</taxon>
        <taxon>Vertebrata</taxon>
        <taxon>Euteleostomi</taxon>
        <taxon>Archelosauria</taxon>
        <taxon>Archosauria</taxon>
        <taxon>Dinosauria</taxon>
        <taxon>Saurischia</taxon>
        <taxon>Theropoda</taxon>
        <taxon>Coelurosauria</taxon>
        <taxon>Aves</taxon>
        <taxon>Neognathae</taxon>
        <taxon>Galloanserae</taxon>
        <taxon>Galliformes</taxon>
        <taxon>Phasianidae</taxon>
        <taxon>Phasianinae</taxon>
        <taxon>Gallus</taxon>
    </lineage>
</organism>
<protein>
    <recommendedName>
        <fullName>Trafficking protein particle complex subunit 11</fullName>
    </recommendedName>
</protein>
<evidence type="ECO:0000250" key="1"/>
<evidence type="ECO:0000250" key="2">
    <source>
        <dbReference type="UniProtKB" id="Q7Z392"/>
    </source>
</evidence>
<evidence type="ECO:0000305" key="3"/>
<accession>Q5ZI89</accession>
<gene>
    <name type="primary">TRAPPC11</name>
    <name type="ORF">RCJMB04_29e4</name>
</gene>
<proteinExistence type="evidence at transcript level"/>
<comment type="function">
    <text evidence="1">Involved in endoplasmic reticulum to Golgi apparatus trafficking at a very early stage.</text>
</comment>
<comment type="subunit">
    <text evidence="1">Component of the multisubunit TRAPP (transport protein particle) complex.</text>
</comment>
<comment type="subcellular location">
    <subcellularLocation>
        <location evidence="2">Golgi apparatus</location>
    </subcellularLocation>
    <subcellularLocation>
        <location evidence="1">Golgi apparatus</location>
        <location evidence="1">cis-Golgi network</location>
    </subcellularLocation>
</comment>
<comment type="similarity">
    <text evidence="3">Belongs to the TRAPPC11 family.</text>
</comment>
<dbReference type="EMBL" id="AJ720895">
    <property type="protein sequence ID" value="CAG32554.1"/>
    <property type="molecule type" value="mRNA"/>
</dbReference>
<dbReference type="RefSeq" id="NP_001026707.1">
    <property type="nucleotide sequence ID" value="NM_001031536.2"/>
</dbReference>
<dbReference type="SMR" id="Q5ZI89"/>
<dbReference type="FunCoup" id="Q5ZI89">
    <property type="interactions" value="2544"/>
</dbReference>
<dbReference type="STRING" id="9031.ENSGALP00000017313"/>
<dbReference type="PaxDb" id="9031-ENSGALP00000017313"/>
<dbReference type="GeneID" id="428748"/>
<dbReference type="KEGG" id="gga:428748"/>
<dbReference type="CTD" id="60684"/>
<dbReference type="VEuPathDB" id="HostDB:geneid_428748"/>
<dbReference type="eggNOG" id="KOG4386">
    <property type="taxonomic scope" value="Eukaryota"/>
</dbReference>
<dbReference type="InParanoid" id="Q5ZI89"/>
<dbReference type="OMA" id="CVEYYRD"/>
<dbReference type="OrthoDB" id="6278596at2759"/>
<dbReference type="PhylomeDB" id="Q5ZI89"/>
<dbReference type="PRO" id="PR:Q5ZI89"/>
<dbReference type="Proteomes" id="UP000000539">
    <property type="component" value="Unassembled WGS sequence"/>
</dbReference>
<dbReference type="GO" id="GO:0005794">
    <property type="term" value="C:Golgi apparatus"/>
    <property type="evidence" value="ECO:0007669"/>
    <property type="project" value="UniProtKB-SubCell"/>
</dbReference>
<dbReference type="GO" id="GO:0016192">
    <property type="term" value="P:vesicle-mediated transport"/>
    <property type="evidence" value="ECO:0007669"/>
    <property type="project" value="UniProtKB-KW"/>
</dbReference>
<dbReference type="InterPro" id="IPR021773">
    <property type="entry name" value="TPC11"/>
</dbReference>
<dbReference type="InterPro" id="IPR025876">
    <property type="entry name" value="TRAPPC11_C"/>
</dbReference>
<dbReference type="PANTHER" id="PTHR14374">
    <property type="entry name" value="FOIE GRAS"/>
    <property type="match status" value="1"/>
</dbReference>
<dbReference type="PANTHER" id="PTHR14374:SF0">
    <property type="entry name" value="TRAFFICKING PROTEIN PARTICLE COMPLEX SUBUNIT 11"/>
    <property type="match status" value="1"/>
</dbReference>
<dbReference type="Pfam" id="PF11817">
    <property type="entry name" value="Foie-gras_1"/>
    <property type="match status" value="1"/>
</dbReference>
<dbReference type="Pfam" id="PF12742">
    <property type="entry name" value="Gryzun-like"/>
    <property type="match status" value="1"/>
</dbReference>
<keyword id="KW-0931">ER-Golgi transport</keyword>
<keyword id="KW-0333">Golgi apparatus</keyword>
<keyword id="KW-1185">Reference proteome</keyword>
<keyword id="KW-0813">Transport</keyword>